<name>YMFD_ECOLI</name>
<organism>
    <name type="scientific">Escherichia coli (strain K12)</name>
    <dbReference type="NCBI Taxonomy" id="83333"/>
    <lineage>
        <taxon>Bacteria</taxon>
        <taxon>Pseudomonadati</taxon>
        <taxon>Pseudomonadota</taxon>
        <taxon>Gammaproteobacteria</taxon>
        <taxon>Enterobacterales</taxon>
        <taxon>Enterobacteriaceae</taxon>
        <taxon>Escherichia</taxon>
    </lineage>
</organism>
<reference key="1">
    <citation type="journal article" date="1997" name="Science">
        <title>The complete genome sequence of Escherichia coli K-12.</title>
        <authorList>
            <person name="Blattner F.R."/>
            <person name="Plunkett G. III"/>
            <person name="Bloch C.A."/>
            <person name="Perna N.T."/>
            <person name="Burland V."/>
            <person name="Riley M."/>
            <person name="Collado-Vides J."/>
            <person name="Glasner J.D."/>
            <person name="Rode C.K."/>
            <person name="Mayhew G.F."/>
            <person name="Gregor J."/>
            <person name="Davis N.W."/>
            <person name="Kirkpatrick H.A."/>
            <person name="Goeden M.A."/>
            <person name="Rose D.J."/>
            <person name="Mau B."/>
            <person name="Shao Y."/>
        </authorList>
    </citation>
    <scope>NUCLEOTIDE SEQUENCE [LARGE SCALE GENOMIC DNA]</scope>
    <source>
        <strain>K12 / MG1655 / ATCC 47076</strain>
    </source>
</reference>
<reference key="2">
    <citation type="journal article" date="2006" name="Mol. Syst. Biol.">
        <title>Highly accurate genome sequences of Escherichia coli K-12 strains MG1655 and W3110.</title>
        <authorList>
            <person name="Hayashi K."/>
            <person name="Morooka N."/>
            <person name="Yamamoto Y."/>
            <person name="Fujita K."/>
            <person name="Isono K."/>
            <person name="Choi S."/>
            <person name="Ohtsubo E."/>
            <person name="Baba T."/>
            <person name="Wanner B.L."/>
            <person name="Mori H."/>
            <person name="Horiuchi T."/>
        </authorList>
    </citation>
    <scope>NUCLEOTIDE SEQUENCE [LARGE SCALE GENOMIC DNA]</scope>
    <source>
        <strain>K12 / W3110 / ATCC 27325 / DSM 5911</strain>
    </source>
</reference>
<dbReference type="EMBL" id="U00096">
    <property type="protein sequence ID" value="AAC74221.1"/>
    <property type="molecule type" value="Genomic_DNA"/>
</dbReference>
<dbReference type="EMBL" id="AP009048">
    <property type="protein sequence ID" value="BAE76375.1"/>
    <property type="molecule type" value="Genomic_DNA"/>
</dbReference>
<dbReference type="PIR" id="F64858">
    <property type="entry name" value="F64858"/>
</dbReference>
<dbReference type="RefSeq" id="NP_415655.1">
    <property type="nucleotide sequence ID" value="NC_000913.3"/>
</dbReference>
<dbReference type="RefSeq" id="WP_000241967.1">
    <property type="nucleotide sequence ID" value="NZ_CP064683.1"/>
</dbReference>
<dbReference type="SMR" id="P75967"/>
<dbReference type="BioGRID" id="4260081">
    <property type="interactions" value="9"/>
</dbReference>
<dbReference type="DIP" id="DIP-12717N"/>
<dbReference type="FunCoup" id="P75967">
    <property type="interactions" value="64"/>
</dbReference>
<dbReference type="IntAct" id="P75967">
    <property type="interactions" value="4"/>
</dbReference>
<dbReference type="STRING" id="511145.b1137"/>
<dbReference type="PaxDb" id="511145-b1137"/>
<dbReference type="EnsemblBacteria" id="AAC74221">
    <property type="protein sequence ID" value="AAC74221"/>
    <property type="gene ID" value="b1137"/>
</dbReference>
<dbReference type="GeneID" id="945329"/>
<dbReference type="KEGG" id="ecj:JW1123"/>
<dbReference type="KEGG" id="eco:b1137"/>
<dbReference type="PATRIC" id="fig|83333.103.peg.1927"/>
<dbReference type="EchoBASE" id="EB3222"/>
<dbReference type="eggNOG" id="COG2227">
    <property type="taxonomic scope" value="Bacteria"/>
</dbReference>
<dbReference type="HOGENOM" id="CLU_1249772_0_0_6"/>
<dbReference type="InParanoid" id="P75967"/>
<dbReference type="OMA" id="IPCESTI"/>
<dbReference type="BioCyc" id="EcoCyc:G6582-MONOMER"/>
<dbReference type="PRO" id="PR:P75967"/>
<dbReference type="Proteomes" id="UP000000625">
    <property type="component" value="Chromosome"/>
</dbReference>
<dbReference type="CDD" id="cd02440">
    <property type="entry name" value="AdoMet_MTases"/>
    <property type="match status" value="1"/>
</dbReference>
<dbReference type="Gene3D" id="3.40.50.150">
    <property type="entry name" value="Vaccinia Virus protein VP39"/>
    <property type="match status" value="1"/>
</dbReference>
<dbReference type="InterPro" id="IPR013217">
    <property type="entry name" value="Methyltransf_12"/>
</dbReference>
<dbReference type="InterPro" id="IPR029063">
    <property type="entry name" value="SAM-dependent_MTases_sf"/>
</dbReference>
<dbReference type="Pfam" id="PF08242">
    <property type="entry name" value="Methyltransf_12"/>
    <property type="match status" value="1"/>
</dbReference>
<dbReference type="SUPFAM" id="SSF53335">
    <property type="entry name" value="S-adenosyl-L-methionine-dependent methyltransferases"/>
    <property type="match status" value="1"/>
</dbReference>
<sequence length="221" mass="25147">MVLALNYNMHGVNIRSENAAKPHTMPSRYLCEYIRSIEKNGHALDFGCGKLRYSDELISKFDEVTFLDSKRQLEREQIIRGIKTKIIDYVPRYYKNANTVAFEDVDKIIGGYDFILCSNVLSAVPCRDTIDKIVLSIKRLLKSGGETLIVNQYKSSYFKKYETGRKHLYGYIYKNSKSVSYYGLLDELAVQEICSSHGLEILKSWSKAGSSYVTVGSCNAI</sequence>
<feature type="chain" id="PRO_0000168841" description="Uncharacterized protein YmfD">
    <location>
        <begin position="1"/>
        <end position="221"/>
    </location>
</feature>
<proteinExistence type="predicted"/>
<keyword id="KW-1185">Reference proteome</keyword>
<gene>
    <name type="primary">ymfD</name>
    <name type="ordered locus">b1137</name>
    <name type="ordered locus">JW1123</name>
</gene>
<accession>P75967</accession>
<accession>Q2MBI1</accession>
<protein>
    <recommendedName>
        <fullName>Uncharacterized protein YmfD</fullName>
    </recommendedName>
</protein>